<gene>
    <name type="primary">NFIL3</name>
    <name type="synonym">E4BP4</name>
</gene>
<keyword id="KW-0010">Activator</keyword>
<keyword id="KW-0090">Biological rhythms</keyword>
<keyword id="KW-0963">Cytoplasm</keyword>
<keyword id="KW-0238">DNA-binding</keyword>
<keyword id="KW-0539">Nucleus</keyword>
<keyword id="KW-0597">Phosphoprotein</keyword>
<keyword id="KW-1185">Reference proteome</keyword>
<keyword id="KW-0678">Repressor</keyword>
<keyword id="KW-0804">Transcription</keyword>
<keyword id="KW-0805">Transcription regulation</keyword>
<protein>
    <recommendedName>
        <fullName>Nuclear factor interleukin-3-regulated protein</fullName>
    </recommendedName>
    <alternativeName>
        <fullName>E4 promoter-binding protein 4</fullName>
        <shortName>cE4BP4 protein</shortName>
    </alternativeName>
    <alternativeName>
        <fullName>bZIP protein E4BP4</fullName>
    </alternativeName>
</protein>
<name>NFIL3_CHICK</name>
<dbReference type="EMBL" id="AF335427">
    <property type="protein sequence ID" value="AAK72227.1"/>
    <property type="molecule type" value="mRNA"/>
</dbReference>
<dbReference type="RefSeq" id="NP_001383370.1">
    <property type="nucleotide sequence ID" value="NM_001396441.1"/>
</dbReference>
<dbReference type="RefSeq" id="NP_989949.1">
    <property type="nucleotide sequence ID" value="NM_204618.3"/>
</dbReference>
<dbReference type="SMR" id="Q90Z72"/>
<dbReference type="FunCoup" id="Q90Z72">
    <property type="interactions" value="200"/>
</dbReference>
<dbReference type="STRING" id="9031.ENSGALP00000024495"/>
<dbReference type="iPTMnet" id="Q90Z72"/>
<dbReference type="PaxDb" id="9031-ENSGALP00000024495"/>
<dbReference type="Ensembl" id="ENSGALT00010022538.1">
    <property type="protein sequence ID" value="ENSGALP00010012982.1"/>
    <property type="gene ID" value="ENSGALG00010009444.1"/>
</dbReference>
<dbReference type="Ensembl" id="ENSGALT00010022543.1">
    <property type="protein sequence ID" value="ENSGALP00010012987.1"/>
    <property type="gene ID" value="ENSGALG00010009444.1"/>
</dbReference>
<dbReference type="Ensembl" id="ENSGALT00010022549.1">
    <property type="protein sequence ID" value="ENSGALP00010012992.1"/>
    <property type="gene ID" value="ENSGALG00010009444.1"/>
</dbReference>
<dbReference type="Ensembl" id="ENSGALT00010022559.1">
    <property type="protein sequence ID" value="ENSGALP00010013002.1"/>
    <property type="gene ID" value="ENSGALG00010009444.1"/>
</dbReference>
<dbReference type="Ensembl" id="ENSGALT00010022563.1">
    <property type="protein sequence ID" value="ENSGALP00010013006.1"/>
    <property type="gene ID" value="ENSGALG00010009444.1"/>
</dbReference>
<dbReference type="GeneID" id="395326"/>
<dbReference type="KEGG" id="gga:395326"/>
<dbReference type="CTD" id="4783"/>
<dbReference type="VEuPathDB" id="HostDB:geneid_395326"/>
<dbReference type="eggNOG" id="KOG3119">
    <property type="taxonomic scope" value="Eukaryota"/>
</dbReference>
<dbReference type="GeneTree" id="ENSGT00940000160540"/>
<dbReference type="InParanoid" id="Q90Z72"/>
<dbReference type="OMA" id="PVDMTSK"/>
<dbReference type="OrthoDB" id="6151507at2759"/>
<dbReference type="PhylomeDB" id="Q90Z72"/>
<dbReference type="PRO" id="PR:Q90Z72"/>
<dbReference type="Proteomes" id="UP000000539">
    <property type="component" value="Chromosome Z"/>
</dbReference>
<dbReference type="GO" id="GO:0005737">
    <property type="term" value="C:cytoplasm"/>
    <property type="evidence" value="ECO:0007669"/>
    <property type="project" value="UniProtKB-SubCell"/>
</dbReference>
<dbReference type="GO" id="GO:0005634">
    <property type="term" value="C:nucleus"/>
    <property type="evidence" value="ECO:0000318"/>
    <property type="project" value="GO_Central"/>
</dbReference>
<dbReference type="GO" id="GO:0090575">
    <property type="term" value="C:RNA polymerase II transcription regulator complex"/>
    <property type="evidence" value="ECO:0007669"/>
    <property type="project" value="Ensembl"/>
</dbReference>
<dbReference type="GO" id="GO:0001227">
    <property type="term" value="F:DNA-binding transcription repressor activity, RNA polymerase II-specific"/>
    <property type="evidence" value="ECO:0007669"/>
    <property type="project" value="Ensembl"/>
</dbReference>
<dbReference type="GO" id="GO:0042802">
    <property type="term" value="F:identical protein binding"/>
    <property type="evidence" value="ECO:0007669"/>
    <property type="project" value="Ensembl"/>
</dbReference>
<dbReference type="GO" id="GO:0000978">
    <property type="term" value="F:RNA polymerase II cis-regulatory region sequence-specific DNA binding"/>
    <property type="evidence" value="ECO:0007669"/>
    <property type="project" value="Ensembl"/>
</dbReference>
<dbReference type="GO" id="GO:0071353">
    <property type="term" value="P:cellular response to interleukin-4"/>
    <property type="evidence" value="ECO:0007669"/>
    <property type="project" value="Ensembl"/>
</dbReference>
<dbReference type="GO" id="GO:0007623">
    <property type="term" value="P:circadian rhythm"/>
    <property type="evidence" value="ECO:0000318"/>
    <property type="project" value="GO_Central"/>
</dbReference>
<dbReference type="GO" id="GO:0006955">
    <property type="term" value="P:immune response"/>
    <property type="evidence" value="ECO:0007669"/>
    <property type="project" value="InterPro"/>
</dbReference>
<dbReference type="GO" id="GO:0001779">
    <property type="term" value="P:natural killer cell differentiation"/>
    <property type="evidence" value="ECO:0007669"/>
    <property type="project" value="Ensembl"/>
</dbReference>
<dbReference type="GO" id="GO:0045892">
    <property type="term" value="P:negative regulation of DNA-templated transcription"/>
    <property type="evidence" value="ECO:0000250"/>
    <property type="project" value="UniProtKB"/>
</dbReference>
<dbReference type="GO" id="GO:0045893">
    <property type="term" value="P:positive regulation of DNA-templated transcription"/>
    <property type="evidence" value="ECO:0007669"/>
    <property type="project" value="Ensembl"/>
</dbReference>
<dbReference type="GO" id="GO:0010628">
    <property type="term" value="P:positive regulation of gene expression"/>
    <property type="evidence" value="ECO:0007669"/>
    <property type="project" value="Ensembl"/>
</dbReference>
<dbReference type="GO" id="GO:0006355">
    <property type="term" value="P:regulation of DNA-templated transcription"/>
    <property type="evidence" value="ECO:0000318"/>
    <property type="project" value="GO_Central"/>
</dbReference>
<dbReference type="GO" id="GO:0006366">
    <property type="term" value="P:transcription by RNA polymerase II"/>
    <property type="evidence" value="ECO:0007669"/>
    <property type="project" value="InterPro"/>
</dbReference>
<dbReference type="CDD" id="cd14694">
    <property type="entry name" value="bZIP_NFIL3"/>
    <property type="match status" value="1"/>
</dbReference>
<dbReference type="FunFam" id="1.20.5.170:FF:000025">
    <property type="entry name" value="nuclear factor interleukin-3-regulated protein-like"/>
    <property type="match status" value="1"/>
</dbReference>
<dbReference type="Gene3D" id="1.20.5.170">
    <property type="match status" value="1"/>
</dbReference>
<dbReference type="InterPro" id="IPR004827">
    <property type="entry name" value="bZIP"/>
</dbReference>
<dbReference type="InterPro" id="IPR046347">
    <property type="entry name" value="bZIP_sf"/>
</dbReference>
<dbReference type="InterPro" id="IPR047229">
    <property type="entry name" value="NFIL3-like"/>
</dbReference>
<dbReference type="InterPro" id="IPR047106">
    <property type="entry name" value="NFIL3-like_bZIP"/>
</dbReference>
<dbReference type="InterPro" id="IPR016743">
    <property type="entry name" value="NFIL3/E4BP4"/>
</dbReference>
<dbReference type="InterPro" id="IPR010533">
    <property type="entry name" value="Vert_IL3-reg_TF"/>
</dbReference>
<dbReference type="PANTHER" id="PTHR15284">
    <property type="entry name" value="NUCLEAR FACTOR INTERLEUKIN-3-REGULATED PROTEIN"/>
    <property type="match status" value="1"/>
</dbReference>
<dbReference type="PANTHER" id="PTHR15284:SF1">
    <property type="entry name" value="NUCLEAR FACTOR INTERLEUKIN-3-REGULATED PROTEIN"/>
    <property type="match status" value="1"/>
</dbReference>
<dbReference type="Pfam" id="PF07716">
    <property type="entry name" value="bZIP_2"/>
    <property type="match status" value="1"/>
</dbReference>
<dbReference type="Pfam" id="PF06529">
    <property type="entry name" value="Vert_IL3-reg_TF"/>
    <property type="match status" value="1"/>
</dbReference>
<dbReference type="PIRSF" id="PIRSF019029">
    <property type="entry name" value="bZIP_E4BP4"/>
    <property type="match status" value="1"/>
</dbReference>
<dbReference type="SMART" id="SM00338">
    <property type="entry name" value="BRLZ"/>
    <property type="match status" value="1"/>
</dbReference>
<dbReference type="SUPFAM" id="SSF57959">
    <property type="entry name" value="Leucine zipper domain"/>
    <property type="match status" value="1"/>
</dbReference>
<dbReference type="PROSITE" id="PS50217">
    <property type="entry name" value="BZIP"/>
    <property type="match status" value="1"/>
</dbReference>
<dbReference type="PROSITE" id="PS00036">
    <property type="entry name" value="BZIP_BASIC"/>
    <property type="match status" value="1"/>
</dbReference>
<proteinExistence type="evidence at protein level"/>
<feature type="chain" id="PRO_0000292670" description="Nuclear factor interleukin-3-regulated protein">
    <location>
        <begin position="1"/>
        <end position="458"/>
    </location>
</feature>
<feature type="domain" description="bZIP" evidence="3">
    <location>
        <begin position="73"/>
        <end position="136"/>
    </location>
</feature>
<feature type="region of interest" description="Basic motif" evidence="3">
    <location>
        <begin position="79"/>
        <end position="95"/>
    </location>
</feature>
<feature type="region of interest" description="Leucine-zipper" evidence="3">
    <location>
        <begin position="99"/>
        <end position="106"/>
    </location>
</feature>
<feature type="region of interest" description="Disordered" evidence="4">
    <location>
        <begin position="218"/>
        <end position="238"/>
    </location>
</feature>
<feature type="region of interest" description="Disordered" evidence="4">
    <location>
        <begin position="255"/>
        <end position="303"/>
    </location>
</feature>
<feature type="compositionally biased region" description="Basic and acidic residues" evidence="4">
    <location>
        <begin position="221"/>
        <end position="235"/>
    </location>
</feature>
<feature type="compositionally biased region" description="Polar residues" evidence="4">
    <location>
        <begin position="261"/>
        <end position="271"/>
    </location>
</feature>
<feature type="modified residue" description="Phosphoserine; by CSNK1E" evidence="6">
    <location>
        <position position="182"/>
    </location>
</feature>
<feature type="mutagenesis site" description="Induces a strong decrease in its electrophoretic retardation." evidence="6">
    <original>S</original>
    <variation>A</variation>
    <location>
        <position position="182"/>
    </location>
</feature>
<feature type="mutagenesis site" description="Does not induce a strong decrease in its electrophoretic retardation." evidence="6">
    <original>S</original>
    <variation>A</variation>
    <location>
        <position position="298"/>
    </location>
</feature>
<feature type="mutagenesis site" description="Does not induce a strong decrease in its electrophoretic retardation." evidence="6">
    <original>S</original>
    <variation>A</variation>
    <location>
        <position position="349"/>
    </location>
</feature>
<organism>
    <name type="scientific">Gallus gallus</name>
    <name type="common">Chicken</name>
    <dbReference type="NCBI Taxonomy" id="9031"/>
    <lineage>
        <taxon>Eukaryota</taxon>
        <taxon>Metazoa</taxon>
        <taxon>Chordata</taxon>
        <taxon>Craniata</taxon>
        <taxon>Vertebrata</taxon>
        <taxon>Euteleostomi</taxon>
        <taxon>Archelosauria</taxon>
        <taxon>Archosauria</taxon>
        <taxon>Dinosauria</taxon>
        <taxon>Saurischia</taxon>
        <taxon>Theropoda</taxon>
        <taxon>Coelurosauria</taxon>
        <taxon>Aves</taxon>
        <taxon>Neognathae</taxon>
        <taxon>Galloanserae</taxon>
        <taxon>Galliformes</taxon>
        <taxon>Phasianidae</taxon>
        <taxon>Phasianinae</taxon>
        <taxon>Gallus</taxon>
    </lineage>
</organism>
<sequence>MQLRKMQTLKKEHGSVDTSSNVDKIMVLKSTLAEVSEELSTNEDILLTEASSGKSKSSACRRKREFIPDEKKDAMYWEKRRKNNEAAKRSREKRRLNDLVLENKLIALGEENATLKAELLSLKLKFGLISSASYAQEIQKLSSSTTVYFQDYQSSKPNINSFVDEHEPSVVGSSCISVIKHSPQSSMSDMSEMPSVEHTQGSRIQSNCRSPENKFQIIKQEPIELEREPRDDRGSYKASIYPNYMGTTFNMYSHSPPLLQVNRSSSNSPRTSETDDGVVGKSSDGEDEQQVPKGPIHSPVEHKNVHATVKVPEVNSSALPHKLRIKAKAMQVKVEAMDNDYDATQKLSSPIDMSSKRHFELEKHGAQNLVHSSHTPFSVQVTNIQDWSLKPELWHQKELNVKIQNGCKTGVVEIKDNVYNVSESENLYLKQGIANLSAEVASLKRLITTQQISASDSG</sequence>
<reference key="1">
    <citation type="journal article" date="2001" name="Proc. Natl. Acad. Sci. U.S.A.">
        <title>Light-induced phase-delay of the chicken pineal circadian clock is associated with the induction of cE4bp4, a potential transcriptional repressor of cPer2 gene.</title>
        <authorList>
            <person name="Doi M."/>
            <person name="Nakajima Y."/>
            <person name="Okano T."/>
            <person name="Fukada Y."/>
        </authorList>
    </citation>
    <scope>NUCLEOTIDE SEQUENCE [MRNA]</scope>
    <scope>FUNCTION</scope>
    <scope>INDUCTION</scope>
</reference>
<reference key="2">
    <citation type="journal article" date="2004" name="Curr. Biol.">
        <title>Negative control of circadian clock regulator E4BP4 by casein kinase Iepsilon-mediated phosphorylation.</title>
        <authorList>
            <person name="Doi M."/>
            <person name="Okano T."/>
            <person name="Yujnovsky I."/>
            <person name="Sassone-Corsi P."/>
            <person name="Fukada Y."/>
        </authorList>
    </citation>
    <scope>FUNCTION</scope>
    <scope>INTERACTION WITH CSNK1E</scope>
    <scope>PHOSPHORYLATION AT SER-182</scope>
    <scope>MUTAGENESIS OF SER-182; SER-298 AND SER-349</scope>
    <scope>INDUCTION</scope>
    <scope>SUBCELLULAR LOCATION</scope>
</reference>
<accession>Q90Z72</accession>
<comment type="function">
    <text evidence="1 5 6">Acts as a transcriptional regulator (By similarity). Represses PER2 transcription through a recognition sequence in the promoter (PubMed:11427718, PubMed:15182670). Component of the circadian clock that may contribute to the rhythmic expression of PER2 gene in a light-dependent and time-of-day-dependent manner (PubMed:11427718, PubMed:15182670).</text>
</comment>
<comment type="subunit">
    <text evidence="2">Homodimer (By similarity). Binds DNA as a dimer (By similarity).</text>
</comment>
<comment type="subcellular location">
    <subcellularLocation>
        <location evidence="6">Cytoplasm</location>
    </subcellularLocation>
    <subcellularLocation>
        <location evidence="3 6">Nucleus</location>
    </subcellularLocation>
</comment>
<comment type="induction">
    <text evidence="5 6">Expression is regulated by light and circadian rhythms in the pineal gland (at protein level).</text>
</comment>
<comment type="PTM">
    <text evidence="6">Phosphorylated. Phosphorylated on Ser-182. Phosphorylation may require prime phosphorylation(s). Phosphorylation takes place at specific times of the day. Phosphorylation leads to its down-regulation through proteasome-dependent degradation.</text>
</comment>
<comment type="similarity">
    <text evidence="7">Belongs to the bZIP family. NFIL3 subfamily.</text>
</comment>
<evidence type="ECO:0000250" key="1">
    <source>
        <dbReference type="UniProtKB" id="O08750"/>
    </source>
</evidence>
<evidence type="ECO:0000250" key="2">
    <source>
        <dbReference type="UniProtKB" id="Q16649"/>
    </source>
</evidence>
<evidence type="ECO:0000255" key="3">
    <source>
        <dbReference type="PROSITE-ProRule" id="PRU00978"/>
    </source>
</evidence>
<evidence type="ECO:0000256" key="4">
    <source>
        <dbReference type="SAM" id="MobiDB-lite"/>
    </source>
</evidence>
<evidence type="ECO:0000269" key="5">
    <source>
    </source>
</evidence>
<evidence type="ECO:0000269" key="6">
    <source>
    </source>
</evidence>
<evidence type="ECO:0000305" key="7"/>